<feature type="chain" id="PRO_0000176036" description="Chemotaxis protein methyltransferase">
    <location>
        <begin position="1"/>
        <end position="262"/>
    </location>
</feature>
<feature type="domain" description="CheR-type methyltransferase" evidence="2">
    <location>
        <begin position="1"/>
        <end position="262"/>
    </location>
</feature>
<feature type="binding site" evidence="1">
    <location>
        <position position="72"/>
    </location>
    <ligand>
        <name>S-adenosyl-L-methionine</name>
        <dbReference type="ChEBI" id="CHEBI:59789"/>
    </ligand>
</feature>
<feature type="binding site" evidence="1">
    <location>
        <position position="74"/>
    </location>
    <ligand>
        <name>S-adenosyl-L-methionine</name>
        <dbReference type="ChEBI" id="CHEBI:59789"/>
    </ligand>
</feature>
<feature type="binding site" evidence="1">
    <location>
        <position position="78"/>
    </location>
    <ligand>
        <name>S-adenosyl-L-methionine</name>
        <dbReference type="ChEBI" id="CHEBI:59789"/>
    </ligand>
</feature>
<feature type="binding site" evidence="1">
    <location>
        <position position="114"/>
    </location>
    <ligand>
        <name>S-adenosyl-L-methionine</name>
        <dbReference type="ChEBI" id="CHEBI:59789"/>
    </ligand>
</feature>
<feature type="binding site" evidence="1">
    <location>
        <position position="137"/>
    </location>
    <ligand>
        <name>S-adenosyl-L-methionine</name>
        <dbReference type="ChEBI" id="CHEBI:59789"/>
    </ligand>
</feature>
<feature type="binding site" evidence="1">
    <location>
        <begin position="191"/>
        <end position="192"/>
    </location>
    <ligand>
        <name>S-adenosyl-L-methionine</name>
        <dbReference type="ChEBI" id="CHEBI:59789"/>
    </ligand>
</feature>
<feature type="binding site" evidence="1">
    <location>
        <begin position="207"/>
        <end position="208"/>
    </location>
    <ligand>
        <name>S-adenosyl-L-methionine</name>
        <dbReference type="ChEBI" id="CHEBI:59789"/>
    </ligand>
</feature>
<evidence type="ECO:0000250" key="1"/>
<evidence type="ECO:0000255" key="2">
    <source>
        <dbReference type="PROSITE-ProRule" id="PRU00051"/>
    </source>
</evidence>
<proteinExistence type="inferred from homology"/>
<dbReference type="EC" id="2.1.1.80"/>
<dbReference type="EMBL" id="AF074971">
    <property type="protein sequence ID" value="AAD41658.1"/>
    <property type="molecule type" value="Genomic_DNA"/>
</dbReference>
<dbReference type="EMBL" id="AL591976">
    <property type="protein sequence ID" value="CAC98761.1"/>
    <property type="molecule type" value="Genomic_DNA"/>
</dbReference>
<dbReference type="PIR" id="AC1160">
    <property type="entry name" value="AC1160"/>
</dbReference>
<dbReference type="RefSeq" id="NP_464210.1">
    <property type="nucleotide sequence ID" value="NC_003210.1"/>
</dbReference>
<dbReference type="RefSeq" id="WP_003721803.1">
    <property type="nucleotide sequence ID" value="NZ_CP149495.1"/>
</dbReference>
<dbReference type="SMR" id="Q9XDE8"/>
<dbReference type="STRING" id="169963.gene:17593334"/>
<dbReference type="PaxDb" id="169963-lmo0683"/>
<dbReference type="EnsemblBacteria" id="CAC98761">
    <property type="protein sequence ID" value="CAC98761"/>
    <property type="gene ID" value="CAC98761"/>
</dbReference>
<dbReference type="GeneID" id="985031"/>
<dbReference type="KEGG" id="lmo:lmo0683"/>
<dbReference type="PATRIC" id="fig|169963.11.peg.704"/>
<dbReference type="eggNOG" id="COG1352">
    <property type="taxonomic scope" value="Bacteria"/>
</dbReference>
<dbReference type="HOGENOM" id="CLU_025854_1_1_9"/>
<dbReference type="OrthoDB" id="9816309at2"/>
<dbReference type="PhylomeDB" id="Q9XDE8"/>
<dbReference type="BioCyc" id="LMON169963:LMO0683-MONOMER"/>
<dbReference type="Proteomes" id="UP000000817">
    <property type="component" value="Chromosome"/>
</dbReference>
<dbReference type="GO" id="GO:0008276">
    <property type="term" value="F:protein methyltransferase activity"/>
    <property type="evidence" value="ECO:0000318"/>
    <property type="project" value="GO_Central"/>
</dbReference>
<dbReference type="GO" id="GO:0008983">
    <property type="term" value="F:protein-glutamate O-methyltransferase activity"/>
    <property type="evidence" value="ECO:0007669"/>
    <property type="project" value="UniProtKB-EC"/>
</dbReference>
<dbReference type="GO" id="GO:0032259">
    <property type="term" value="P:methylation"/>
    <property type="evidence" value="ECO:0007669"/>
    <property type="project" value="UniProtKB-KW"/>
</dbReference>
<dbReference type="Gene3D" id="3.40.50.150">
    <property type="entry name" value="Vaccinia Virus protein VP39"/>
    <property type="match status" value="1"/>
</dbReference>
<dbReference type="InterPro" id="IPR050903">
    <property type="entry name" value="Bact_Chemotaxis_MeTrfase"/>
</dbReference>
<dbReference type="InterPro" id="IPR022642">
    <property type="entry name" value="CheR_C"/>
</dbReference>
<dbReference type="InterPro" id="IPR000780">
    <property type="entry name" value="CheR_MeTrfase"/>
</dbReference>
<dbReference type="InterPro" id="IPR022641">
    <property type="entry name" value="CheR_N"/>
</dbReference>
<dbReference type="InterPro" id="IPR029063">
    <property type="entry name" value="SAM-dependent_MTases_sf"/>
</dbReference>
<dbReference type="PANTHER" id="PTHR24422">
    <property type="entry name" value="CHEMOTAXIS PROTEIN METHYLTRANSFERASE"/>
    <property type="match status" value="1"/>
</dbReference>
<dbReference type="PANTHER" id="PTHR24422:SF19">
    <property type="entry name" value="CHEMOTAXIS PROTEIN METHYLTRANSFERASE"/>
    <property type="match status" value="1"/>
</dbReference>
<dbReference type="Pfam" id="PF01739">
    <property type="entry name" value="CheR"/>
    <property type="match status" value="1"/>
</dbReference>
<dbReference type="Pfam" id="PF03705">
    <property type="entry name" value="CheR_N"/>
    <property type="match status" value="1"/>
</dbReference>
<dbReference type="PRINTS" id="PR00996">
    <property type="entry name" value="CHERMTFRASE"/>
</dbReference>
<dbReference type="SMART" id="SM00138">
    <property type="entry name" value="MeTrc"/>
    <property type="match status" value="1"/>
</dbReference>
<dbReference type="SUPFAM" id="SSF47757">
    <property type="entry name" value="Chemotaxis receptor methyltransferase CheR, N-terminal domain"/>
    <property type="match status" value="1"/>
</dbReference>
<dbReference type="SUPFAM" id="SSF53335">
    <property type="entry name" value="S-adenosyl-L-methionine-dependent methyltransferases"/>
    <property type="match status" value="1"/>
</dbReference>
<dbReference type="PROSITE" id="PS50123">
    <property type="entry name" value="CHER"/>
    <property type="match status" value="1"/>
</dbReference>
<name>CHER_LISMO</name>
<organism>
    <name type="scientific">Listeria monocytogenes serovar 1/2a (strain ATCC BAA-679 / EGD-e)</name>
    <dbReference type="NCBI Taxonomy" id="169963"/>
    <lineage>
        <taxon>Bacteria</taxon>
        <taxon>Bacillati</taxon>
        <taxon>Bacillota</taxon>
        <taxon>Bacilli</taxon>
        <taxon>Bacillales</taxon>
        <taxon>Listeriaceae</taxon>
        <taxon>Listeria</taxon>
    </lineage>
</organism>
<protein>
    <recommendedName>
        <fullName>Chemotaxis protein methyltransferase</fullName>
        <ecNumber>2.1.1.80</ecNumber>
    </recommendedName>
</protein>
<comment type="function">
    <text evidence="1">Methylation of the membrane-bound methyl-accepting chemotaxis proteins (MCP) to form gamma-glutamyl methyl ester residues in MCP.</text>
</comment>
<comment type="catalytic activity">
    <reaction>
        <text>L-glutamyl-[protein] + S-adenosyl-L-methionine = [protein]-L-glutamate 5-O-methyl ester + S-adenosyl-L-homocysteine</text>
        <dbReference type="Rhea" id="RHEA:24452"/>
        <dbReference type="Rhea" id="RHEA-COMP:10208"/>
        <dbReference type="Rhea" id="RHEA-COMP:10311"/>
        <dbReference type="ChEBI" id="CHEBI:29973"/>
        <dbReference type="ChEBI" id="CHEBI:57856"/>
        <dbReference type="ChEBI" id="CHEBI:59789"/>
        <dbReference type="ChEBI" id="CHEBI:82795"/>
        <dbReference type="EC" id="2.1.1.80"/>
    </reaction>
</comment>
<gene>
    <name type="primary">cheR</name>
    <name type="ordered locus">lmo0683</name>
</gene>
<accession>Q9XDE8</accession>
<reference key="1">
    <citation type="journal article" date="1998" name="FEMS Microbiol. Lett.">
        <title>Characterization of a large motility gene cluster containing the cheR, motAB genes of Listeria monocytogenes and evidence that PrfA downregulates motility genes.</title>
        <authorList>
            <person name="Michel E."/>
            <person name="Mengaud J."/>
            <person name="Galsworthy S."/>
            <person name="Cossart P."/>
        </authorList>
    </citation>
    <scope>NUCLEOTIDE SEQUENCE [GENOMIC DNA]</scope>
    <source>
        <strain>LO28 / Serovar 1/2c</strain>
    </source>
</reference>
<reference key="2">
    <citation type="journal article" date="2001" name="Science">
        <title>Comparative genomics of Listeria species.</title>
        <authorList>
            <person name="Glaser P."/>
            <person name="Frangeul L."/>
            <person name="Buchrieser C."/>
            <person name="Rusniok C."/>
            <person name="Amend A."/>
            <person name="Baquero F."/>
            <person name="Berche P."/>
            <person name="Bloecker H."/>
            <person name="Brandt P."/>
            <person name="Chakraborty T."/>
            <person name="Charbit A."/>
            <person name="Chetouani F."/>
            <person name="Couve E."/>
            <person name="de Daruvar A."/>
            <person name="Dehoux P."/>
            <person name="Domann E."/>
            <person name="Dominguez-Bernal G."/>
            <person name="Duchaud E."/>
            <person name="Durant L."/>
            <person name="Dussurget O."/>
            <person name="Entian K.-D."/>
            <person name="Fsihi H."/>
            <person name="Garcia-del Portillo F."/>
            <person name="Garrido P."/>
            <person name="Gautier L."/>
            <person name="Goebel W."/>
            <person name="Gomez-Lopez N."/>
            <person name="Hain T."/>
            <person name="Hauf J."/>
            <person name="Jackson D."/>
            <person name="Jones L.-M."/>
            <person name="Kaerst U."/>
            <person name="Kreft J."/>
            <person name="Kuhn M."/>
            <person name="Kunst F."/>
            <person name="Kurapkat G."/>
            <person name="Madueno E."/>
            <person name="Maitournam A."/>
            <person name="Mata Vicente J."/>
            <person name="Ng E."/>
            <person name="Nedjari H."/>
            <person name="Nordsiek G."/>
            <person name="Novella S."/>
            <person name="de Pablos B."/>
            <person name="Perez-Diaz J.-C."/>
            <person name="Purcell R."/>
            <person name="Remmel B."/>
            <person name="Rose M."/>
            <person name="Schlueter T."/>
            <person name="Simoes N."/>
            <person name="Tierrez A."/>
            <person name="Vazquez-Boland J.-A."/>
            <person name="Voss H."/>
            <person name="Wehland J."/>
            <person name="Cossart P."/>
        </authorList>
    </citation>
    <scope>NUCLEOTIDE SEQUENCE [LARGE SCALE GENOMIC DNA]</scope>
    <source>
        <strain>ATCC BAA-679 / EGD-e</strain>
    </source>
</reference>
<keyword id="KW-0489">Methyltransferase</keyword>
<keyword id="KW-1185">Reference proteome</keyword>
<keyword id="KW-0949">S-adenosyl-L-methionine</keyword>
<keyword id="KW-0808">Transferase</keyword>
<sequence length="262" mass="30820">MIPDLEKDYLYFTRVVKRDLGLDLALYKETQMKRRILSFIVKKKYITFGEFFKHLKKDAVLLDEFISLITINVSSFFRNRNRWDALEKQVLPRLLEDSRGKLRVWSAACSSGEEPYSLAMMMERSVGTRHYDILATDLEPAILKRAVIGEYQSRQMEELSEQERHTAFVEKGDTYQILPKYRKSIRFRRHDLLTDYYEKGFDLIVCRNVLIYFTAEGKHQAYQKFAESLRRGGVLFIGGSEQILNPADYGLATLNNFFYIKT</sequence>